<feature type="propeptide" id="PRO_0000450224" evidence="1">
    <location>
        <begin position="1"/>
        <end position="5"/>
    </location>
</feature>
<feature type="chain" id="PRO_0000165014" description="Baseplate hub assembly protein gp26">
    <location>
        <begin position="6"/>
        <end position="208"/>
    </location>
</feature>
<feature type="sequence conflict" description="In Ref. 3." evidence="3" ref="3">
    <original>FR</original>
    <variation>SG</variation>
    <location>
        <begin position="116"/>
        <end position="117"/>
    </location>
</feature>
<organismHost>
    <name type="scientific">Escherichia coli</name>
    <dbReference type="NCBI Taxonomy" id="562"/>
</organismHost>
<protein>
    <recommendedName>
        <fullName evidence="2">Baseplate hub assembly protein gp26</fullName>
    </recommendedName>
    <alternativeName>
        <fullName>Gene product 26</fullName>
        <shortName>gp26</shortName>
    </alternativeName>
    <alternativeName>
        <fullName>Hub protein 26</fullName>
    </alternativeName>
</protein>
<accession>P13335</accession>
<organism>
    <name type="scientific">Enterobacteria phage T4</name>
    <name type="common">Bacteriophage T4</name>
    <dbReference type="NCBI Taxonomy" id="10665"/>
    <lineage>
        <taxon>Viruses</taxon>
        <taxon>Duplodnaviria</taxon>
        <taxon>Heunggongvirae</taxon>
        <taxon>Uroviricota</taxon>
        <taxon>Caudoviricetes</taxon>
        <taxon>Straboviridae</taxon>
        <taxon>Tevenvirinae</taxon>
        <taxon>Tequatrovirus</taxon>
    </lineage>
</organism>
<comment type="function">
    <text evidence="2 4 5 6">Baseplate hub assembly chaperone involved in the tail assembly.</text>
</comment>
<comment type="subcellular location">
    <subcellularLocation>
        <location evidence="1">Virion</location>
    </subcellularLocation>
    <text evidence="1">Present in the baseplate.</text>
</comment>
<keyword id="KW-0903">Direct protein sequencing</keyword>
<keyword id="KW-0426">Late protein</keyword>
<keyword id="KW-1185">Reference proteome</keyword>
<keyword id="KW-1188">Viral release from host cell</keyword>
<keyword id="KW-1245">Viral tail assembly</keyword>
<keyword id="KW-0946">Virion</keyword>
<dbReference type="EMBL" id="X17685">
    <property type="protein sequence ID" value="CAA35676.1"/>
    <property type="molecule type" value="Genomic_DNA"/>
</dbReference>
<dbReference type="EMBL" id="AF158101">
    <property type="protein sequence ID" value="AAD42434.1"/>
    <property type="molecule type" value="Genomic_DNA"/>
</dbReference>
<dbReference type="EMBL" id="J04354">
    <property type="protein sequence ID" value="AAA88464.1"/>
    <property type="molecule type" value="Genomic_DNA"/>
</dbReference>
<dbReference type="EMBL" id="M77695">
    <property type="protein sequence ID" value="AAA32548.1"/>
    <property type="molecule type" value="Genomic_DNA"/>
</dbReference>
<dbReference type="PIR" id="JF0055">
    <property type="entry name" value="JF0055"/>
</dbReference>
<dbReference type="PIR" id="JQ0441">
    <property type="entry name" value="GXBPT4"/>
</dbReference>
<dbReference type="RefSeq" id="NP_049801.1">
    <property type="nucleotide sequence ID" value="NC_000866.4"/>
</dbReference>
<dbReference type="TCDB" id="1.K.1.1.1">
    <property type="family name" value="the gp27/5 t4-baseplate (t4-bp) family"/>
</dbReference>
<dbReference type="GeneID" id="1258552"/>
<dbReference type="KEGG" id="vg:1258552"/>
<dbReference type="OrthoDB" id="13289at10239"/>
<dbReference type="Proteomes" id="UP000009087">
    <property type="component" value="Segment"/>
</dbReference>
<dbReference type="GO" id="GO:0044423">
    <property type="term" value="C:virion component"/>
    <property type="evidence" value="ECO:0007669"/>
    <property type="project" value="UniProtKB-KW"/>
</dbReference>
<dbReference type="GO" id="GO:0098003">
    <property type="term" value="P:viral tail assembly"/>
    <property type="evidence" value="ECO:0007669"/>
    <property type="project" value="UniProtKB-KW"/>
</dbReference>
<dbReference type="InterPro" id="IPR024364">
    <property type="entry name" value="Baseplate_phage_T4-like"/>
</dbReference>
<dbReference type="Pfam" id="PF12322">
    <property type="entry name" value="T4_baseplate"/>
    <property type="match status" value="1"/>
</dbReference>
<evidence type="ECO:0000269" key="1">
    <source>
    </source>
</evidence>
<evidence type="ECO:0000303" key="2">
    <source>
    </source>
</evidence>
<evidence type="ECO:0000305" key="3"/>
<evidence type="ECO:0000305" key="4">
    <source>
    </source>
</evidence>
<evidence type="ECO:0000305" key="5">
    <source>
    </source>
</evidence>
<evidence type="ECO:0000305" key="6">
    <source>
    </source>
</evidence>
<reference key="1">
    <citation type="journal article" date="1990" name="Nucleic Acids Res.">
        <title>Bacteriophage T4 gene 26.</title>
        <authorList>
            <person name="Nivinskas R."/>
            <person name="Raudonikiene A."/>
            <person name="Vaiskunaite R."/>
        </authorList>
    </citation>
    <scope>NUCLEOTIDE SEQUENCE [GENOMIC DNA]</scope>
</reference>
<reference key="2">
    <citation type="journal article" date="2003" name="Microbiol. Mol. Biol. Rev.">
        <title>Bacteriophage T4 genome.</title>
        <authorList>
            <person name="Miller E.S."/>
            <person name="Kutter E."/>
            <person name="Mosig G."/>
            <person name="Arisaka F."/>
            <person name="Kunisawa T."/>
            <person name="Ruger W."/>
        </authorList>
    </citation>
    <scope>NUCLEOTIDE SEQUENCE [LARGE SCALE GENOMIC DNA]</scope>
</reference>
<reference key="3">
    <citation type="journal article" date="1988" name="Nucleic Acids Res.">
        <title>Bacteriophage T4 gene 25.</title>
        <authorList>
            <person name="Gruidl M.E."/>
            <person name="Canan N."/>
            <person name="Mosig G."/>
        </authorList>
    </citation>
    <scope>NUCLEOTIDE SEQUENCE [GENOMIC DNA] OF 116-208</scope>
    <source>
        <strain>D</strain>
    </source>
</reference>
<reference key="4">
    <citation type="journal article" date="1989" name="Virology">
        <title>Bacteriophage T4 late gene expression: overlapping promoters direct divergent transcription of the base plate gene cluster.</title>
        <authorList>
            <person name="Scarlato V."/>
            <person name="Storlazzi A."/>
            <person name="Gargano S."/>
            <person name="Cascino A."/>
        </authorList>
    </citation>
    <scope>NUCLEOTIDE SEQUENCE [GENOMIC DNA] OF 1-26</scope>
    <source>
        <strain>D</strain>
    </source>
</reference>
<reference key="5">
    <citation type="journal article" date="1991" name="Virology">
        <title>Two bacteriophage T4 base plate genes (25 and 26) and the DNA repair gene uvsY belong to spatially and temporally overlapping transcription units.</title>
        <authorList>
            <person name="Gruidl M.E."/>
            <person name="Chen T.C."/>
            <person name="Gargano S."/>
            <person name="Storlazzi A."/>
            <person name="Cascino A."/>
            <person name="Mosig G."/>
        </authorList>
    </citation>
    <scope>NUCLEOTIDE SEQUENCE [GENOMIC DNA] OF 130-208</scope>
</reference>
<reference key="6">
    <citation type="journal article" date="2004" name="J. Bacteriol.">
        <title>Processing of the tail lysozyme (gp5) of bacteriophage T4.</title>
        <authorList>
            <person name="Ye N."/>
            <person name="Nemoto N."/>
        </authorList>
    </citation>
    <scope>PROTEIN SEQUENCE OF 6-16</scope>
    <scope>SUBCELLULAR LOCATION</scope>
</reference>
<reference key="7">
    <citation type="journal article" date="1984" name="J. Virol.">
        <title>Identification of bacteriophage T4D gene products 26 and 51 as baseplate hub structural components.</title>
        <authorList>
            <person name="Kozloff L.M."/>
            <person name="Lute M."/>
        </authorList>
    </citation>
    <scope>FUNCTION</scope>
</reference>
<reference key="8">
    <citation type="journal article" date="1990" name="J. Virol.">
        <title>Structure of the bacteriophage T4 baseplate as determined by chemical cross-linking.</title>
        <authorList>
            <person name="Watts N.R."/>
            <person name="Coombs D.H."/>
        </authorList>
    </citation>
    <scope>FUNCTION</scope>
</reference>
<reference key="9">
    <citation type="journal article" date="2003" name="Cell. Mol. Life Sci.">
        <title>Structure and morphogenesis of bacteriophage T4.</title>
        <authorList>
            <person name="Leiman P.G."/>
            <person name="Kanamaru S."/>
            <person name="Mesyanzhinov V.V."/>
            <person name="Arisaka F."/>
            <person name="Rossmann M.G."/>
        </authorList>
    </citation>
    <scope>REVIEW ON FUNCTION</scope>
</reference>
<reference key="10">
    <citation type="journal article" date="2010" name="Virol. J.">
        <title>Morphogenesis of the T4 tail and tail fibers.</title>
        <authorList>
            <person name="Leiman P.G."/>
            <person name="Arisaka F."/>
            <person name="van Raaij M.J."/>
            <person name="Kostyuchenko V.A."/>
            <person name="Aksyuk A.A."/>
            <person name="Kanamaru S."/>
            <person name="Rossmann M.G."/>
        </authorList>
    </citation>
    <scope>REVIEW ON FUNCTION</scope>
</reference>
<reference key="11">
    <citation type="journal article" date="2016" name="Nature">
        <title>Structure of the T4 baseplate and its function in triggering sheath contraction.</title>
        <authorList>
            <person name="Taylor N.M."/>
            <person name="Prokhorov N.S."/>
            <person name="Guerrero-Ferreira R.C."/>
            <person name="Shneider M.M."/>
            <person name="Browning C."/>
            <person name="Goldie K.N."/>
            <person name="Stahlberg H."/>
            <person name="Leiman P.G."/>
        </authorList>
    </citation>
    <scope>FUNCTION</scope>
</reference>
<proteinExistence type="evidence at protein level"/>
<gene>
    <name type="primary">26</name>
</gene>
<name>GP26_BPT4</name>
<sequence>MYEYKFDVRVGSKIINCRAFTLKEYLELITAKNNGSVEVIVKKLIKDCTNAKDLNRQESELLLIHLWAHSLGEVNHENSWKCTCGTEIPTHINLLHTQIDAPEDLWYTLGDIKIKFRYPKIFDDKNIAHMIVSCIETIHANGESIPVEDLNEKELEDLYSIITESDIVAIKDMLLKPTVYLAVPIKCPECGKTHAHVIRGLKEFFELL</sequence>